<reference key="1">
    <citation type="journal article" date="2009" name="Appl. Environ. Microbiol.">
        <title>Three genomes from the phylum Acidobacteria provide insight into the lifestyles of these microorganisms in soils.</title>
        <authorList>
            <person name="Ward N.L."/>
            <person name="Challacombe J.F."/>
            <person name="Janssen P.H."/>
            <person name="Henrissat B."/>
            <person name="Coutinho P.M."/>
            <person name="Wu M."/>
            <person name="Xie G."/>
            <person name="Haft D.H."/>
            <person name="Sait M."/>
            <person name="Badger J."/>
            <person name="Barabote R.D."/>
            <person name="Bradley B."/>
            <person name="Brettin T.S."/>
            <person name="Brinkac L.M."/>
            <person name="Bruce D."/>
            <person name="Creasy T."/>
            <person name="Daugherty S.C."/>
            <person name="Davidsen T.M."/>
            <person name="DeBoy R.T."/>
            <person name="Detter J.C."/>
            <person name="Dodson R.J."/>
            <person name="Durkin A.S."/>
            <person name="Ganapathy A."/>
            <person name="Gwinn-Giglio M."/>
            <person name="Han C.S."/>
            <person name="Khouri H."/>
            <person name="Kiss H."/>
            <person name="Kothari S.P."/>
            <person name="Madupu R."/>
            <person name="Nelson K.E."/>
            <person name="Nelson W.C."/>
            <person name="Paulsen I."/>
            <person name="Penn K."/>
            <person name="Ren Q."/>
            <person name="Rosovitz M.J."/>
            <person name="Selengut J.D."/>
            <person name="Shrivastava S."/>
            <person name="Sullivan S.A."/>
            <person name="Tapia R."/>
            <person name="Thompson L.S."/>
            <person name="Watkins K.L."/>
            <person name="Yang Q."/>
            <person name="Yu C."/>
            <person name="Zafar N."/>
            <person name="Zhou L."/>
            <person name="Kuske C.R."/>
        </authorList>
    </citation>
    <scope>NUCLEOTIDE SEQUENCE [LARGE SCALE GENOMIC DNA]</scope>
    <source>
        <strain>Ellin6076</strain>
    </source>
</reference>
<evidence type="ECO:0000255" key="1">
    <source>
        <dbReference type="HAMAP-Rule" id="MF_01161"/>
    </source>
</evidence>
<protein>
    <recommendedName>
        <fullName evidence="1">tRNA(Ile)-lysidine synthase</fullName>
        <ecNumber evidence="1">6.3.4.19</ecNumber>
    </recommendedName>
    <alternativeName>
        <fullName evidence="1">tRNA(Ile)-2-lysyl-cytidine synthase</fullName>
    </alternativeName>
    <alternativeName>
        <fullName evidence="1">tRNA(Ile)-lysidine synthetase</fullName>
    </alternativeName>
</protein>
<keyword id="KW-0067">ATP-binding</keyword>
<keyword id="KW-0963">Cytoplasm</keyword>
<keyword id="KW-0436">Ligase</keyword>
<keyword id="KW-0547">Nucleotide-binding</keyword>
<keyword id="KW-0819">tRNA processing</keyword>
<feature type="chain" id="PRO_1000065627" description="tRNA(Ile)-lysidine synthase">
    <location>
        <begin position="1"/>
        <end position="440"/>
    </location>
</feature>
<feature type="binding site" evidence="1">
    <location>
        <begin position="13"/>
        <end position="18"/>
    </location>
    <ligand>
        <name>ATP</name>
        <dbReference type="ChEBI" id="CHEBI:30616"/>
    </ligand>
</feature>
<comment type="function">
    <text evidence="1">Ligates lysine onto the cytidine present at position 34 of the AUA codon-specific tRNA(Ile) that contains the anticodon CAU, in an ATP-dependent manner. Cytidine is converted to lysidine, thus changing the amino acid specificity of the tRNA from methionine to isoleucine.</text>
</comment>
<comment type="catalytic activity">
    <reaction evidence="1">
        <text>cytidine(34) in tRNA(Ile2) + L-lysine + ATP = lysidine(34) in tRNA(Ile2) + AMP + diphosphate + H(+)</text>
        <dbReference type="Rhea" id="RHEA:43744"/>
        <dbReference type="Rhea" id="RHEA-COMP:10625"/>
        <dbReference type="Rhea" id="RHEA-COMP:10670"/>
        <dbReference type="ChEBI" id="CHEBI:15378"/>
        <dbReference type="ChEBI" id="CHEBI:30616"/>
        <dbReference type="ChEBI" id="CHEBI:32551"/>
        <dbReference type="ChEBI" id="CHEBI:33019"/>
        <dbReference type="ChEBI" id="CHEBI:82748"/>
        <dbReference type="ChEBI" id="CHEBI:83665"/>
        <dbReference type="ChEBI" id="CHEBI:456215"/>
        <dbReference type="EC" id="6.3.4.19"/>
    </reaction>
</comment>
<comment type="subcellular location">
    <subcellularLocation>
        <location evidence="1">Cytoplasm</location>
    </subcellularLocation>
</comment>
<comment type="domain">
    <text>The N-terminal region contains the highly conserved SGGXDS motif, predicted to be a P-loop motif involved in ATP binding.</text>
</comment>
<comment type="similarity">
    <text evidence="1">Belongs to the tRNA(Ile)-lysidine synthase family.</text>
</comment>
<organism>
    <name type="scientific">Solibacter usitatus (strain Ellin6076)</name>
    <dbReference type="NCBI Taxonomy" id="234267"/>
    <lineage>
        <taxon>Bacteria</taxon>
        <taxon>Pseudomonadati</taxon>
        <taxon>Acidobacteriota</taxon>
        <taxon>Terriglobia</taxon>
        <taxon>Bryobacterales</taxon>
        <taxon>Solibacteraceae</taxon>
        <taxon>Candidatus Solibacter</taxon>
    </lineage>
</organism>
<name>TILS_SOLUE</name>
<proteinExistence type="inferred from homology"/>
<gene>
    <name evidence="1" type="primary">tilS</name>
    <name type="ordered locus">Acid_7075</name>
</gene>
<sequence>MFASGARVAVGVSGGADSVCLLHALVELGGLKLSVLHVDHGLRGAESRADAEFVGELAARMGLPFCLREVTLGPGNVEQEGRRARLRFFHEQLAAGNCDRVALGHTRSDQAETVLFRFLRGSGTAGLAGIRPVTAEGIVRPLIELERAEIEEYLRERQIPWREDATNAGEEFARNRIRHGLLPQLAAEWNPALVETLAHTAEFARAEEAYWAGEIDRLSAESLTAGDGCVLIRTESLKALSLAVARRLVRRAIQMAKGDLRGVDFGHVERVVELASAPTGRGRTQVPGLDVRRSFEWLRLGVPFTRKPYSLKPLVPGTTQIPGTRNGISLELIEKSETSVLPWNVYNTEMGCLDWKRLAGSLELRNWRFGDQYQPMGLTGSEKIKTLFQLQRIPVWERAQWPVLTDGESIVWTRRFGPAAGFAAGPESGVVLKLGEVTIR</sequence>
<dbReference type="EC" id="6.3.4.19" evidence="1"/>
<dbReference type="EMBL" id="CP000473">
    <property type="protein sequence ID" value="ABJ87988.1"/>
    <property type="molecule type" value="Genomic_DNA"/>
</dbReference>
<dbReference type="SMR" id="Q01QT2"/>
<dbReference type="STRING" id="234267.Acid_7075"/>
<dbReference type="KEGG" id="sus:Acid_7075"/>
<dbReference type="eggNOG" id="COG0037">
    <property type="taxonomic scope" value="Bacteria"/>
</dbReference>
<dbReference type="HOGENOM" id="CLU_018869_0_1_0"/>
<dbReference type="InParanoid" id="Q01QT2"/>
<dbReference type="OrthoDB" id="9807403at2"/>
<dbReference type="GO" id="GO:0005737">
    <property type="term" value="C:cytoplasm"/>
    <property type="evidence" value="ECO:0007669"/>
    <property type="project" value="UniProtKB-SubCell"/>
</dbReference>
<dbReference type="GO" id="GO:0005524">
    <property type="term" value="F:ATP binding"/>
    <property type="evidence" value="ECO:0007669"/>
    <property type="project" value="UniProtKB-UniRule"/>
</dbReference>
<dbReference type="GO" id="GO:0032267">
    <property type="term" value="F:tRNA(Ile)-lysidine synthase activity"/>
    <property type="evidence" value="ECO:0007669"/>
    <property type="project" value="UniProtKB-EC"/>
</dbReference>
<dbReference type="GO" id="GO:0006400">
    <property type="term" value="P:tRNA modification"/>
    <property type="evidence" value="ECO:0007669"/>
    <property type="project" value="UniProtKB-UniRule"/>
</dbReference>
<dbReference type="CDD" id="cd01992">
    <property type="entry name" value="TilS_N"/>
    <property type="match status" value="1"/>
</dbReference>
<dbReference type="Gene3D" id="1.20.59.20">
    <property type="match status" value="1"/>
</dbReference>
<dbReference type="Gene3D" id="3.40.50.620">
    <property type="entry name" value="HUPs"/>
    <property type="match status" value="1"/>
</dbReference>
<dbReference type="HAMAP" id="MF_01161">
    <property type="entry name" value="tRNA_Ile_lys_synt"/>
    <property type="match status" value="1"/>
</dbReference>
<dbReference type="InterPro" id="IPR012796">
    <property type="entry name" value="Lysidine-tRNA-synth_C"/>
</dbReference>
<dbReference type="InterPro" id="IPR014729">
    <property type="entry name" value="Rossmann-like_a/b/a_fold"/>
</dbReference>
<dbReference type="InterPro" id="IPR011063">
    <property type="entry name" value="TilS/TtcA_N"/>
</dbReference>
<dbReference type="InterPro" id="IPR012094">
    <property type="entry name" value="tRNA_Ile_lys_synt"/>
</dbReference>
<dbReference type="InterPro" id="IPR012795">
    <property type="entry name" value="tRNA_Ile_lys_synt_N"/>
</dbReference>
<dbReference type="InterPro" id="IPR015262">
    <property type="entry name" value="tRNA_Ile_lys_synt_subst-bd"/>
</dbReference>
<dbReference type="NCBIfam" id="TIGR02433">
    <property type="entry name" value="lysidine_TilS_C"/>
    <property type="match status" value="1"/>
</dbReference>
<dbReference type="NCBIfam" id="TIGR02432">
    <property type="entry name" value="lysidine_TilS_N"/>
    <property type="match status" value="1"/>
</dbReference>
<dbReference type="PANTHER" id="PTHR43033">
    <property type="entry name" value="TRNA(ILE)-LYSIDINE SYNTHASE-RELATED"/>
    <property type="match status" value="1"/>
</dbReference>
<dbReference type="PANTHER" id="PTHR43033:SF1">
    <property type="entry name" value="TRNA(ILE)-LYSIDINE SYNTHASE-RELATED"/>
    <property type="match status" value="1"/>
</dbReference>
<dbReference type="Pfam" id="PF01171">
    <property type="entry name" value="ATP_bind_3"/>
    <property type="match status" value="1"/>
</dbReference>
<dbReference type="Pfam" id="PF09179">
    <property type="entry name" value="TilS"/>
    <property type="match status" value="1"/>
</dbReference>
<dbReference type="Pfam" id="PF11734">
    <property type="entry name" value="TilS_C"/>
    <property type="match status" value="1"/>
</dbReference>
<dbReference type="SMART" id="SM00977">
    <property type="entry name" value="TilS_C"/>
    <property type="match status" value="1"/>
</dbReference>
<dbReference type="SUPFAM" id="SSF52402">
    <property type="entry name" value="Adenine nucleotide alpha hydrolases-like"/>
    <property type="match status" value="1"/>
</dbReference>
<dbReference type="SUPFAM" id="SSF82829">
    <property type="entry name" value="MesJ substrate recognition domain-like"/>
    <property type="match status" value="1"/>
</dbReference>
<dbReference type="SUPFAM" id="SSF56037">
    <property type="entry name" value="PheT/TilS domain"/>
    <property type="match status" value="1"/>
</dbReference>
<accession>Q01QT2</accession>